<name>PHAR3_MOUSE</name>
<sequence length="558" mass="62652">MAASEDGSSCLVSRGRSQSDPSFLSDSSATSTDAGENPDEMDQTPPARSEPLVSGIRTPPVRRNSKLATLGRIFKPWKWRKKKNEKLKQTTSALEKKMAGRQGREELIKQGLLEMMEQDSENKACSPKEGSQPVQSEPPAGEQETLTSEGAQPGSPSASGTDQVSQDELLSSDAHLDDTANIPSASTAEEADAGSLLPTTDEPSQALAGSDSLDSPPRSLERSVSQLPSPPLLPTPPPKASSKATKNVTGQAALFQGPSMKNNEPALRGQLATPTGSPHVTTVHRPLPPSRVMEELHRALATKHRQDSFQGRECRGSPKKRMDVRLSRTSSMERGKERDEAWSFDGASENKWTATKDSEENKENLMLSSELKDDMLLYQDEEALNDSIISGTLPRKCKKELLAVKLRNRPSKQELEDRNIFPRRTDEERQEIRQQIEMKLSKRLSQRPAVEELERRNILKQRNDQTEQEERREIKQRLTRKLNQRPTVDELRDRKILIRFSDYVEVARAQDYDRRADKPWTRLSAADKAAIRKELNEYKSNEMEVHASSKHLTRFHRP</sequence>
<keyword id="KW-0009">Actin-binding</keyword>
<keyword id="KW-0025">Alternative splicing</keyword>
<keyword id="KW-0175">Coiled coil</keyword>
<keyword id="KW-0539">Nucleus</keyword>
<keyword id="KW-0597">Phosphoprotein</keyword>
<keyword id="KW-0650">Protein phosphatase inhibitor</keyword>
<keyword id="KW-1185">Reference proteome</keyword>
<keyword id="KW-0677">Repeat</keyword>
<protein>
    <recommendedName>
        <fullName>Phosphatase and actin regulator 3</fullName>
    </recommendedName>
    <alternativeName>
        <fullName>Scaffold-associated PP1-inhibiting protein</fullName>
        <shortName>Scapinin</shortName>
    </alternativeName>
</protein>
<comment type="subunit">
    <text evidence="1">Binds PPP1CA and actin; thus inhibiting the protein phosphatase 1 (PP1) activity.</text>
</comment>
<comment type="subcellular location">
    <subcellularLocation>
        <location evidence="1">Nucleus matrix</location>
    </subcellularLocation>
    <text evidence="1">Localized to the nuclear matrix-intermediate filament scaffold.</text>
</comment>
<comment type="alternative products">
    <event type="alternative splicing"/>
    <isoform>
        <id>Q8BYK5-1</id>
        <name>1</name>
        <sequence type="displayed"/>
    </isoform>
    <isoform>
        <id>Q8BYK5-2</id>
        <name>2</name>
        <sequence type="described" ref="VSP_009093"/>
    </isoform>
    <isoform>
        <id>Q8BYK5-3</id>
        <name>3</name>
        <sequence type="described" ref="VSP_009094"/>
    </isoform>
    <isoform>
        <id>Q8BYK5-4</id>
        <name>4</name>
        <sequence type="described" ref="VSP_009095"/>
    </isoform>
</comment>
<comment type="similarity">
    <text evidence="6">Belongs to the phosphatase and actin regulator family.</text>
</comment>
<gene>
    <name type="primary">Phactr3</name>
    <name type="synonym">Scapin1</name>
</gene>
<evidence type="ECO:0000250" key="1"/>
<evidence type="ECO:0000250" key="2">
    <source>
        <dbReference type="UniProtKB" id="Q96KR7"/>
    </source>
</evidence>
<evidence type="ECO:0000255" key="3"/>
<evidence type="ECO:0000256" key="4">
    <source>
        <dbReference type="SAM" id="MobiDB-lite"/>
    </source>
</evidence>
<evidence type="ECO:0000303" key="5">
    <source>
    </source>
</evidence>
<evidence type="ECO:0000305" key="6"/>
<evidence type="ECO:0007744" key="7">
    <source>
    </source>
</evidence>
<dbReference type="EMBL" id="AY501387">
    <property type="protein sequence ID" value="AAS86433.1"/>
    <property type="molecule type" value="mRNA"/>
</dbReference>
<dbReference type="EMBL" id="AK005136">
    <property type="protein sequence ID" value="BAB23834.1"/>
    <property type="molecule type" value="mRNA"/>
</dbReference>
<dbReference type="EMBL" id="AK032242">
    <property type="protein sequence ID" value="BAC27776.1"/>
    <property type="molecule type" value="mRNA"/>
</dbReference>
<dbReference type="EMBL" id="AK038449">
    <property type="protein sequence ID" value="BAC30003.1"/>
    <property type="molecule type" value="mRNA"/>
</dbReference>
<dbReference type="EMBL" id="AK039213">
    <property type="protein sequence ID" value="BAC30278.1"/>
    <property type="molecule type" value="mRNA"/>
</dbReference>
<dbReference type="EMBL" id="BC058621">
    <property type="protein sequence ID" value="AAH58621.1"/>
    <property type="molecule type" value="mRNA"/>
</dbReference>
<dbReference type="EMBL" id="BC059869">
    <property type="protein sequence ID" value="AAH59869.1"/>
    <property type="molecule type" value="mRNA"/>
</dbReference>
<dbReference type="CCDS" id="CCDS17158.1">
    <molecule id="Q8BYK5-1"/>
</dbReference>
<dbReference type="CCDS" id="CCDS17159.1">
    <molecule id="Q8BYK5-4"/>
</dbReference>
<dbReference type="CCDS" id="CCDS50837.1">
    <molecule id="Q8BYK5-3"/>
</dbReference>
<dbReference type="CCDS" id="CCDS50839.1">
    <molecule id="Q8BYK5-2"/>
</dbReference>
<dbReference type="RefSeq" id="NP_001007155.1">
    <molecule id="Q8BYK5-4"/>
    <property type="nucleotide sequence ID" value="NM_001007154.3"/>
</dbReference>
<dbReference type="RefSeq" id="NP_001171260.1">
    <molecule id="Q8BYK5-3"/>
    <property type="nucleotide sequence ID" value="NM_001177789.2"/>
</dbReference>
<dbReference type="RefSeq" id="NP_001171261.1">
    <property type="nucleotide sequence ID" value="NM_001177790.1"/>
</dbReference>
<dbReference type="RefSeq" id="NP_001171262.1">
    <molecule id="Q8BYK5-2"/>
    <property type="nucleotide sequence ID" value="NM_001177791.1"/>
</dbReference>
<dbReference type="RefSeq" id="NP_083082.1">
    <molecule id="Q8BYK5-1"/>
    <property type="nucleotide sequence ID" value="NM_028806.3"/>
</dbReference>
<dbReference type="RefSeq" id="XP_006500793.1">
    <molecule id="Q8BYK5-4"/>
    <property type="nucleotide sequence ID" value="XM_006500730.4"/>
</dbReference>
<dbReference type="SMR" id="Q8BYK5"/>
<dbReference type="BioGRID" id="216561">
    <property type="interactions" value="2"/>
</dbReference>
<dbReference type="FunCoup" id="Q8BYK5">
    <property type="interactions" value="858"/>
</dbReference>
<dbReference type="STRING" id="10090.ENSMUSP00000104543"/>
<dbReference type="GlyGen" id="Q8BYK5">
    <property type="glycosylation" value="1 site"/>
</dbReference>
<dbReference type="iPTMnet" id="Q8BYK5"/>
<dbReference type="PhosphoSitePlus" id="Q8BYK5"/>
<dbReference type="PaxDb" id="10090-ENSMUSP00000104543"/>
<dbReference type="ProteomicsDB" id="287692">
    <molecule id="Q8BYK5-1"/>
</dbReference>
<dbReference type="ProteomicsDB" id="287693">
    <molecule id="Q8BYK5-2"/>
</dbReference>
<dbReference type="ProteomicsDB" id="287694">
    <molecule id="Q8BYK5-3"/>
</dbReference>
<dbReference type="ProteomicsDB" id="287695">
    <molecule id="Q8BYK5-4"/>
</dbReference>
<dbReference type="Antibodypedia" id="29289">
    <property type="antibodies" value="114 antibodies from 22 providers"/>
</dbReference>
<dbReference type="DNASU" id="74189"/>
<dbReference type="Ensembl" id="ENSMUST00000103065.2">
    <molecule id="Q8BYK5-4"/>
    <property type="protein sequence ID" value="ENSMUSP00000099354.2"/>
    <property type="gene ID" value="ENSMUSG00000027525.19"/>
</dbReference>
<dbReference type="Ensembl" id="ENSMUST00000103066.10">
    <molecule id="Q8BYK5-1"/>
    <property type="protein sequence ID" value="ENSMUSP00000099355.4"/>
    <property type="gene ID" value="ENSMUSG00000027525.19"/>
</dbReference>
<dbReference type="Ensembl" id="ENSMUST00000108915.8">
    <molecule id="Q8BYK5-2"/>
    <property type="protein sequence ID" value="ENSMUSP00000104543.2"/>
    <property type="gene ID" value="ENSMUSG00000027525.19"/>
</dbReference>
<dbReference type="Ensembl" id="ENSMUST00000108916.8">
    <molecule id="Q8BYK5-3"/>
    <property type="protein sequence ID" value="ENSMUSP00000104544.2"/>
    <property type="gene ID" value="ENSMUSG00000027525.19"/>
</dbReference>
<dbReference type="GeneID" id="74189"/>
<dbReference type="KEGG" id="mmu:74189"/>
<dbReference type="UCSC" id="uc008ohj.2">
    <molecule id="Q8BYK5-3"/>
    <property type="organism name" value="mouse"/>
</dbReference>
<dbReference type="UCSC" id="uc008ohk.2">
    <molecule id="Q8BYK5-1"/>
    <property type="organism name" value="mouse"/>
</dbReference>
<dbReference type="UCSC" id="uc008ohl.2">
    <molecule id="Q8BYK5-2"/>
    <property type="organism name" value="mouse"/>
</dbReference>
<dbReference type="AGR" id="MGI:1921439"/>
<dbReference type="CTD" id="116154"/>
<dbReference type="MGI" id="MGI:1921439">
    <property type="gene designation" value="Phactr3"/>
</dbReference>
<dbReference type="VEuPathDB" id="HostDB:ENSMUSG00000027525"/>
<dbReference type="eggNOG" id="KOG4339">
    <property type="taxonomic scope" value="Eukaryota"/>
</dbReference>
<dbReference type="GeneTree" id="ENSGT00940000157562"/>
<dbReference type="HOGENOM" id="CLU_015753_3_1_1"/>
<dbReference type="InParanoid" id="Q8BYK5"/>
<dbReference type="OMA" id="AESKACT"/>
<dbReference type="OrthoDB" id="71119at9989"/>
<dbReference type="TreeFam" id="TF316316"/>
<dbReference type="BioGRID-ORCS" id="74189">
    <property type="hits" value="1 hit in 76 CRISPR screens"/>
</dbReference>
<dbReference type="PRO" id="PR:Q8BYK5"/>
<dbReference type="Proteomes" id="UP000000589">
    <property type="component" value="Chromosome 2"/>
</dbReference>
<dbReference type="RNAct" id="Q8BYK5">
    <property type="molecule type" value="protein"/>
</dbReference>
<dbReference type="Bgee" id="ENSMUSG00000027525">
    <property type="expression patterns" value="Expressed in piriform cortex and 119 other cell types or tissues"/>
</dbReference>
<dbReference type="ExpressionAtlas" id="Q8BYK5">
    <property type="expression patterns" value="baseline and differential"/>
</dbReference>
<dbReference type="GO" id="GO:0016363">
    <property type="term" value="C:nuclear matrix"/>
    <property type="evidence" value="ECO:0007669"/>
    <property type="project" value="UniProtKB-SubCell"/>
</dbReference>
<dbReference type="GO" id="GO:0005654">
    <property type="term" value="C:nucleoplasm"/>
    <property type="evidence" value="ECO:0007669"/>
    <property type="project" value="Ensembl"/>
</dbReference>
<dbReference type="GO" id="GO:0003779">
    <property type="term" value="F:actin binding"/>
    <property type="evidence" value="ECO:0007669"/>
    <property type="project" value="UniProtKB-KW"/>
</dbReference>
<dbReference type="GO" id="GO:0004864">
    <property type="term" value="F:protein phosphatase inhibitor activity"/>
    <property type="evidence" value="ECO:0007669"/>
    <property type="project" value="UniProtKB-KW"/>
</dbReference>
<dbReference type="Gene3D" id="6.10.140.1750">
    <property type="match status" value="1"/>
</dbReference>
<dbReference type="Gene3D" id="6.10.140.2130">
    <property type="match status" value="1"/>
</dbReference>
<dbReference type="InterPro" id="IPR004018">
    <property type="entry name" value="RPEL_repeat"/>
</dbReference>
<dbReference type="PANTHER" id="PTHR12751:SF7">
    <property type="entry name" value="PHOSPHATASE AND ACTIN REGULATOR 3"/>
    <property type="match status" value="1"/>
</dbReference>
<dbReference type="PANTHER" id="PTHR12751">
    <property type="entry name" value="PHOSPHATASE AND ACTIN REGULATOR PHACTR"/>
    <property type="match status" value="1"/>
</dbReference>
<dbReference type="Pfam" id="PF02755">
    <property type="entry name" value="RPEL"/>
    <property type="match status" value="1"/>
</dbReference>
<dbReference type="SMART" id="SM00707">
    <property type="entry name" value="RPEL"/>
    <property type="match status" value="4"/>
</dbReference>
<dbReference type="PROSITE" id="PS51073">
    <property type="entry name" value="RPEL"/>
    <property type="match status" value="4"/>
</dbReference>
<proteinExistence type="evidence at protein level"/>
<reference key="1">
    <citation type="journal article" date="2004" name="Proc. Natl. Acad. Sci. U.S.A.">
        <title>Phactrs 1-4: a family of protein phosphatase 1 and actin regulatory proteins.</title>
        <authorList>
            <person name="Allen P.B."/>
            <person name="Greenfield A.T."/>
            <person name="Svenningsson P."/>
            <person name="Haspeslagh D.C."/>
            <person name="Greengard P."/>
        </authorList>
    </citation>
    <scope>NUCLEOTIDE SEQUENCE [MRNA] (ISOFORM 1)</scope>
    <scope>INTERACTION WITH PPP1CA AND ACTIN</scope>
    <source>
        <strain>C57BL/6J</strain>
    </source>
</reference>
<reference key="2">
    <citation type="journal article" date="2005" name="Science">
        <title>The transcriptional landscape of the mammalian genome.</title>
        <authorList>
            <person name="Carninci P."/>
            <person name="Kasukawa T."/>
            <person name="Katayama S."/>
            <person name="Gough J."/>
            <person name="Frith M.C."/>
            <person name="Maeda N."/>
            <person name="Oyama R."/>
            <person name="Ravasi T."/>
            <person name="Lenhard B."/>
            <person name="Wells C."/>
            <person name="Kodzius R."/>
            <person name="Shimokawa K."/>
            <person name="Bajic V.B."/>
            <person name="Brenner S.E."/>
            <person name="Batalov S."/>
            <person name="Forrest A.R."/>
            <person name="Zavolan M."/>
            <person name="Davis M.J."/>
            <person name="Wilming L.G."/>
            <person name="Aidinis V."/>
            <person name="Allen J.E."/>
            <person name="Ambesi-Impiombato A."/>
            <person name="Apweiler R."/>
            <person name="Aturaliya R.N."/>
            <person name="Bailey T.L."/>
            <person name="Bansal M."/>
            <person name="Baxter L."/>
            <person name="Beisel K.W."/>
            <person name="Bersano T."/>
            <person name="Bono H."/>
            <person name="Chalk A.M."/>
            <person name="Chiu K.P."/>
            <person name="Choudhary V."/>
            <person name="Christoffels A."/>
            <person name="Clutterbuck D.R."/>
            <person name="Crowe M.L."/>
            <person name="Dalla E."/>
            <person name="Dalrymple B.P."/>
            <person name="de Bono B."/>
            <person name="Della Gatta G."/>
            <person name="di Bernardo D."/>
            <person name="Down T."/>
            <person name="Engstrom P."/>
            <person name="Fagiolini M."/>
            <person name="Faulkner G."/>
            <person name="Fletcher C.F."/>
            <person name="Fukushima T."/>
            <person name="Furuno M."/>
            <person name="Futaki S."/>
            <person name="Gariboldi M."/>
            <person name="Georgii-Hemming P."/>
            <person name="Gingeras T.R."/>
            <person name="Gojobori T."/>
            <person name="Green R.E."/>
            <person name="Gustincich S."/>
            <person name="Harbers M."/>
            <person name="Hayashi Y."/>
            <person name="Hensch T.K."/>
            <person name="Hirokawa N."/>
            <person name="Hill D."/>
            <person name="Huminiecki L."/>
            <person name="Iacono M."/>
            <person name="Ikeo K."/>
            <person name="Iwama A."/>
            <person name="Ishikawa T."/>
            <person name="Jakt M."/>
            <person name="Kanapin A."/>
            <person name="Katoh M."/>
            <person name="Kawasawa Y."/>
            <person name="Kelso J."/>
            <person name="Kitamura H."/>
            <person name="Kitano H."/>
            <person name="Kollias G."/>
            <person name="Krishnan S.P."/>
            <person name="Kruger A."/>
            <person name="Kummerfeld S.K."/>
            <person name="Kurochkin I.V."/>
            <person name="Lareau L.F."/>
            <person name="Lazarevic D."/>
            <person name="Lipovich L."/>
            <person name="Liu J."/>
            <person name="Liuni S."/>
            <person name="McWilliam S."/>
            <person name="Madan Babu M."/>
            <person name="Madera M."/>
            <person name="Marchionni L."/>
            <person name="Matsuda H."/>
            <person name="Matsuzawa S."/>
            <person name="Miki H."/>
            <person name="Mignone F."/>
            <person name="Miyake S."/>
            <person name="Morris K."/>
            <person name="Mottagui-Tabar S."/>
            <person name="Mulder N."/>
            <person name="Nakano N."/>
            <person name="Nakauchi H."/>
            <person name="Ng P."/>
            <person name="Nilsson R."/>
            <person name="Nishiguchi S."/>
            <person name="Nishikawa S."/>
            <person name="Nori F."/>
            <person name="Ohara O."/>
            <person name="Okazaki Y."/>
            <person name="Orlando V."/>
            <person name="Pang K.C."/>
            <person name="Pavan W.J."/>
            <person name="Pavesi G."/>
            <person name="Pesole G."/>
            <person name="Petrovsky N."/>
            <person name="Piazza S."/>
            <person name="Reed J."/>
            <person name="Reid J.F."/>
            <person name="Ring B.Z."/>
            <person name="Ringwald M."/>
            <person name="Rost B."/>
            <person name="Ruan Y."/>
            <person name="Salzberg S.L."/>
            <person name="Sandelin A."/>
            <person name="Schneider C."/>
            <person name="Schoenbach C."/>
            <person name="Sekiguchi K."/>
            <person name="Semple C.A."/>
            <person name="Seno S."/>
            <person name="Sessa L."/>
            <person name="Sheng Y."/>
            <person name="Shibata Y."/>
            <person name="Shimada H."/>
            <person name="Shimada K."/>
            <person name="Silva D."/>
            <person name="Sinclair B."/>
            <person name="Sperling S."/>
            <person name="Stupka E."/>
            <person name="Sugiura K."/>
            <person name="Sultana R."/>
            <person name="Takenaka Y."/>
            <person name="Taki K."/>
            <person name="Tammoja K."/>
            <person name="Tan S.L."/>
            <person name="Tang S."/>
            <person name="Taylor M.S."/>
            <person name="Tegner J."/>
            <person name="Teichmann S.A."/>
            <person name="Ueda H.R."/>
            <person name="van Nimwegen E."/>
            <person name="Verardo R."/>
            <person name="Wei C.L."/>
            <person name="Yagi K."/>
            <person name="Yamanishi H."/>
            <person name="Zabarovsky E."/>
            <person name="Zhu S."/>
            <person name="Zimmer A."/>
            <person name="Hide W."/>
            <person name="Bult C."/>
            <person name="Grimmond S.M."/>
            <person name="Teasdale R.D."/>
            <person name="Liu E.T."/>
            <person name="Brusic V."/>
            <person name="Quackenbush J."/>
            <person name="Wahlestedt C."/>
            <person name="Mattick J.S."/>
            <person name="Hume D.A."/>
            <person name="Kai C."/>
            <person name="Sasaki D."/>
            <person name="Tomaru Y."/>
            <person name="Fukuda S."/>
            <person name="Kanamori-Katayama M."/>
            <person name="Suzuki M."/>
            <person name="Aoki J."/>
            <person name="Arakawa T."/>
            <person name="Iida J."/>
            <person name="Imamura K."/>
            <person name="Itoh M."/>
            <person name="Kato T."/>
            <person name="Kawaji H."/>
            <person name="Kawagashira N."/>
            <person name="Kawashima T."/>
            <person name="Kojima M."/>
            <person name="Kondo S."/>
            <person name="Konno H."/>
            <person name="Nakano K."/>
            <person name="Ninomiya N."/>
            <person name="Nishio T."/>
            <person name="Okada M."/>
            <person name="Plessy C."/>
            <person name="Shibata K."/>
            <person name="Shiraki T."/>
            <person name="Suzuki S."/>
            <person name="Tagami M."/>
            <person name="Waki K."/>
            <person name="Watahiki A."/>
            <person name="Okamura-Oho Y."/>
            <person name="Suzuki H."/>
            <person name="Kawai J."/>
            <person name="Hayashizaki Y."/>
        </authorList>
    </citation>
    <scope>NUCLEOTIDE SEQUENCE [LARGE SCALE MRNA] (ISOFORMS 1; 2; 3 AND 4)</scope>
    <source>
        <strain>C57BL/6J</strain>
        <tissue>Cerebellum</tissue>
        <tissue>Hypothalamus</tissue>
        <tissue>Olfactory bulb</tissue>
    </source>
</reference>
<reference key="3">
    <citation type="journal article" date="2004" name="Genome Res.">
        <title>The status, quality, and expansion of the NIH full-length cDNA project: the Mammalian Gene Collection (MGC).</title>
        <authorList>
            <consortium name="The MGC Project Team"/>
        </authorList>
    </citation>
    <scope>NUCLEOTIDE SEQUENCE [LARGE SCALE MRNA] (ISOFORM 1)</scope>
    <source>
        <strain>C57BL/6J</strain>
        <tissue>Brain</tissue>
    </source>
</reference>
<reference key="4">
    <citation type="journal article" date="2010" name="Cell">
        <title>A tissue-specific atlas of mouse protein phosphorylation and expression.</title>
        <authorList>
            <person name="Huttlin E.L."/>
            <person name="Jedrychowski M.P."/>
            <person name="Elias J.E."/>
            <person name="Goswami T."/>
            <person name="Rad R."/>
            <person name="Beausoleil S.A."/>
            <person name="Villen J."/>
            <person name="Haas W."/>
            <person name="Sowa M.E."/>
            <person name="Gygi S.P."/>
        </authorList>
    </citation>
    <scope>PHOSPHORYLATION [LARGE SCALE ANALYSIS] AT SER-229 AND THR-235</scope>
    <scope>IDENTIFICATION BY MASS SPECTROMETRY [LARGE SCALE ANALYSIS]</scope>
    <source>
        <tissue>Brain</tissue>
    </source>
</reference>
<organism>
    <name type="scientific">Mus musculus</name>
    <name type="common">Mouse</name>
    <dbReference type="NCBI Taxonomy" id="10090"/>
    <lineage>
        <taxon>Eukaryota</taxon>
        <taxon>Metazoa</taxon>
        <taxon>Chordata</taxon>
        <taxon>Craniata</taxon>
        <taxon>Vertebrata</taxon>
        <taxon>Euteleostomi</taxon>
        <taxon>Mammalia</taxon>
        <taxon>Eutheria</taxon>
        <taxon>Euarchontoglires</taxon>
        <taxon>Glires</taxon>
        <taxon>Rodentia</taxon>
        <taxon>Myomorpha</taxon>
        <taxon>Muroidea</taxon>
        <taxon>Muridae</taxon>
        <taxon>Murinae</taxon>
        <taxon>Mus</taxon>
        <taxon>Mus</taxon>
    </lineage>
</organism>
<accession>Q8BYK5</accession>
<accession>Q8BYS8</accession>
<accession>Q8C058</accession>
<accession>Q9DB87</accession>
<feature type="chain" id="PRO_0000126639" description="Phosphatase and actin regulator 3">
    <location>
        <begin position="1"/>
        <end position="558"/>
    </location>
</feature>
<feature type="repeat" description="RPEL 1">
    <location>
        <begin position="92"/>
        <end position="117"/>
    </location>
</feature>
<feature type="repeat" description="RPEL 2">
    <location>
        <begin position="400"/>
        <end position="425"/>
    </location>
</feature>
<feature type="repeat" description="RPEL 3">
    <location>
        <begin position="438"/>
        <end position="463"/>
    </location>
</feature>
<feature type="repeat" description="RPEL 4">
    <location>
        <begin position="476"/>
        <end position="501"/>
    </location>
</feature>
<feature type="region of interest" description="Disordered" evidence="4">
    <location>
        <begin position="1"/>
        <end position="69"/>
    </location>
</feature>
<feature type="region of interest" description="Disordered" evidence="4">
    <location>
        <begin position="81"/>
        <end position="288"/>
    </location>
</feature>
<feature type="region of interest" description="Disordered" evidence="4">
    <location>
        <begin position="300"/>
        <end position="366"/>
    </location>
</feature>
<feature type="coiled-coil region" evidence="3">
    <location>
        <begin position="449"/>
        <end position="485"/>
    </location>
</feature>
<feature type="compositionally biased region" description="Polar residues" evidence="4">
    <location>
        <begin position="1"/>
        <end position="11"/>
    </location>
</feature>
<feature type="compositionally biased region" description="Low complexity" evidence="4">
    <location>
        <begin position="18"/>
        <end position="33"/>
    </location>
</feature>
<feature type="compositionally biased region" description="Basic and acidic residues" evidence="4">
    <location>
        <begin position="94"/>
        <end position="108"/>
    </location>
</feature>
<feature type="compositionally biased region" description="Polar residues" evidence="4">
    <location>
        <begin position="144"/>
        <end position="169"/>
    </location>
</feature>
<feature type="compositionally biased region" description="Pro residues" evidence="4">
    <location>
        <begin position="228"/>
        <end position="239"/>
    </location>
</feature>
<feature type="compositionally biased region" description="Basic and acidic residues" evidence="4">
    <location>
        <begin position="300"/>
        <end position="341"/>
    </location>
</feature>
<feature type="compositionally biased region" description="Basic and acidic residues" evidence="4">
    <location>
        <begin position="354"/>
        <end position="363"/>
    </location>
</feature>
<feature type="modified residue" description="Phosphothreonine" evidence="2">
    <location>
        <position position="69"/>
    </location>
</feature>
<feature type="modified residue" description="Phosphoserine" evidence="7">
    <location>
        <position position="229"/>
    </location>
</feature>
<feature type="modified residue" description="Phosphothreonine" evidence="7">
    <location>
        <position position="235"/>
    </location>
</feature>
<feature type="splice variant" id="VSP_009095" description="In isoform 4." evidence="5">
    <location>
        <begin position="1"/>
        <end position="40"/>
    </location>
</feature>
<feature type="splice variant" id="VSP_009093" description="In isoform 2." evidence="5">
    <original>MAASEDGSSCLVSRGRSQSDPSFLSDSSATSTDAGENP</original>
    <variation>MQTANQMLSLNFRRMKSGTAAVRTRARHRPPGSGPSRCG</variation>
    <location>
        <begin position="1"/>
        <end position="38"/>
    </location>
</feature>
<feature type="splice variant" id="VSP_009094" description="In isoform 3." evidence="5">
    <original>MAASEDGSSCLVSRGRSQSDPSFLSDSSATSTDAGENP</original>
    <variation>MRGQGRGHARWPAPLRSLLRAFGPQDTTTGGLEQ</variation>
    <location>
        <begin position="1"/>
        <end position="38"/>
    </location>
</feature>